<name>AROQ_YERPP</name>
<comment type="function">
    <text evidence="1">Catalyzes a trans-dehydration via an enolate intermediate.</text>
</comment>
<comment type="catalytic activity">
    <reaction evidence="1">
        <text>3-dehydroquinate = 3-dehydroshikimate + H2O</text>
        <dbReference type="Rhea" id="RHEA:21096"/>
        <dbReference type="ChEBI" id="CHEBI:15377"/>
        <dbReference type="ChEBI" id="CHEBI:16630"/>
        <dbReference type="ChEBI" id="CHEBI:32364"/>
        <dbReference type="EC" id="4.2.1.10"/>
    </reaction>
</comment>
<comment type="pathway">
    <text evidence="1">Metabolic intermediate biosynthesis; chorismate biosynthesis; chorismate from D-erythrose 4-phosphate and phosphoenolpyruvate: step 3/7.</text>
</comment>
<comment type="subunit">
    <text evidence="1">Homododecamer.</text>
</comment>
<comment type="similarity">
    <text evidence="1">Belongs to the type-II 3-dehydroquinase family.</text>
</comment>
<protein>
    <recommendedName>
        <fullName evidence="1">3-dehydroquinate dehydratase</fullName>
        <shortName evidence="1">3-dehydroquinase</shortName>
        <ecNumber evidence="1">4.2.1.10</ecNumber>
    </recommendedName>
    <alternativeName>
        <fullName evidence="1">Type II DHQase</fullName>
    </alternativeName>
</protein>
<accession>A4THC4</accession>
<evidence type="ECO:0000255" key="1">
    <source>
        <dbReference type="HAMAP-Rule" id="MF_00169"/>
    </source>
</evidence>
<keyword id="KW-0028">Amino-acid biosynthesis</keyword>
<keyword id="KW-0057">Aromatic amino acid biosynthesis</keyword>
<keyword id="KW-0456">Lyase</keyword>
<dbReference type="EC" id="4.2.1.10" evidence="1"/>
<dbReference type="EMBL" id="CP000668">
    <property type="protein sequence ID" value="ABP38686.1"/>
    <property type="molecule type" value="Genomic_DNA"/>
</dbReference>
<dbReference type="RefSeq" id="WP_002210071.1">
    <property type="nucleotide sequence ID" value="NZ_CP009715.1"/>
</dbReference>
<dbReference type="SMR" id="A4THC4"/>
<dbReference type="GeneID" id="57975085"/>
<dbReference type="KEGG" id="ypp:YPDSF_0267"/>
<dbReference type="PATRIC" id="fig|386656.14.peg.1565"/>
<dbReference type="UniPathway" id="UPA00053">
    <property type="reaction ID" value="UER00086"/>
</dbReference>
<dbReference type="GO" id="GO:0003855">
    <property type="term" value="F:3-dehydroquinate dehydratase activity"/>
    <property type="evidence" value="ECO:0007669"/>
    <property type="project" value="UniProtKB-UniRule"/>
</dbReference>
<dbReference type="GO" id="GO:0008652">
    <property type="term" value="P:amino acid biosynthetic process"/>
    <property type="evidence" value="ECO:0007669"/>
    <property type="project" value="UniProtKB-KW"/>
</dbReference>
<dbReference type="GO" id="GO:0009073">
    <property type="term" value="P:aromatic amino acid family biosynthetic process"/>
    <property type="evidence" value="ECO:0007669"/>
    <property type="project" value="UniProtKB-KW"/>
</dbReference>
<dbReference type="GO" id="GO:0009423">
    <property type="term" value="P:chorismate biosynthetic process"/>
    <property type="evidence" value="ECO:0007669"/>
    <property type="project" value="UniProtKB-UniRule"/>
</dbReference>
<dbReference type="GO" id="GO:0019631">
    <property type="term" value="P:quinate catabolic process"/>
    <property type="evidence" value="ECO:0007669"/>
    <property type="project" value="TreeGrafter"/>
</dbReference>
<dbReference type="CDD" id="cd00466">
    <property type="entry name" value="DHQase_II"/>
    <property type="match status" value="1"/>
</dbReference>
<dbReference type="Gene3D" id="3.40.50.9100">
    <property type="entry name" value="Dehydroquinase, class II"/>
    <property type="match status" value="1"/>
</dbReference>
<dbReference type="HAMAP" id="MF_00169">
    <property type="entry name" value="AroQ"/>
    <property type="match status" value="1"/>
</dbReference>
<dbReference type="InterPro" id="IPR001874">
    <property type="entry name" value="DHquinase_II"/>
</dbReference>
<dbReference type="InterPro" id="IPR018509">
    <property type="entry name" value="DHquinase_II_CS"/>
</dbReference>
<dbReference type="InterPro" id="IPR036441">
    <property type="entry name" value="DHquinase_II_sf"/>
</dbReference>
<dbReference type="NCBIfam" id="TIGR01088">
    <property type="entry name" value="aroQ"/>
    <property type="match status" value="1"/>
</dbReference>
<dbReference type="NCBIfam" id="NF003804">
    <property type="entry name" value="PRK05395.1-1"/>
    <property type="match status" value="1"/>
</dbReference>
<dbReference type="NCBIfam" id="NF003805">
    <property type="entry name" value="PRK05395.1-2"/>
    <property type="match status" value="1"/>
</dbReference>
<dbReference type="NCBIfam" id="NF003806">
    <property type="entry name" value="PRK05395.1-3"/>
    <property type="match status" value="1"/>
</dbReference>
<dbReference type="NCBIfam" id="NF003807">
    <property type="entry name" value="PRK05395.1-4"/>
    <property type="match status" value="1"/>
</dbReference>
<dbReference type="PANTHER" id="PTHR21272">
    <property type="entry name" value="CATABOLIC 3-DEHYDROQUINASE"/>
    <property type="match status" value="1"/>
</dbReference>
<dbReference type="PANTHER" id="PTHR21272:SF3">
    <property type="entry name" value="CATABOLIC 3-DEHYDROQUINASE"/>
    <property type="match status" value="1"/>
</dbReference>
<dbReference type="Pfam" id="PF01220">
    <property type="entry name" value="DHquinase_II"/>
    <property type="match status" value="1"/>
</dbReference>
<dbReference type="PIRSF" id="PIRSF001399">
    <property type="entry name" value="DHquinase_II"/>
    <property type="match status" value="1"/>
</dbReference>
<dbReference type="SUPFAM" id="SSF52304">
    <property type="entry name" value="Type II 3-dehydroquinate dehydratase"/>
    <property type="match status" value="1"/>
</dbReference>
<dbReference type="PROSITE" id="PS01029">
    <property type="entry name" value="DEHYDROQUINASE_II"/>
    <property type="match status" value="1"/>
</dbReference>
<proteinExistence type="inferred from homology"/>
<sequence>MSDKFHILLLNGPNLNLLGTREPEKYGYTTLAEIVSQLEIQAQGMDVALSHLQSNAEHALIDSIHQARGNTDFILINPAAFTHTSVALRDALLGVQIPFIEIHLSNVHAREPFRHHSYLSDIAVGVICGLGADGYNFALQAAVNRLSKSN</sequence>
<organism>
    <name type="scientific">Yersinia pestis (strain Pestoides F)</name>
    <dbReference type="NCBI Taxonomy" id="386656"/>
    <lineage>
        <taxon>Bacteria</taxon>
        <taxon>Pseudomonadati</taxon>
        <taxon>Pseudomonadota</taxon>
        <taxon>Gammaproteobacteria</taxon>
        <taxon>Enterobacterales</taxon>
        <taxon>Yersiniaceae</taxon>
        <taxon>Yersinia</taxon>
    </lineage>
</organism>
<gene>
    <name evidence="1" type="primary">aroQ</name>
    <name type="ordered locus">YPDSF_0267</name>
</gene>
<reference key="1">
    <citation type="submission" date="2007-02" db="EMBL/GenBank/DDBJ databases">
        <title>Complete sequence of chromosome of Yersinia pestis Pestoides F.</title>
        <authorList>
            <consortium name="US DOE Joint Genome Institute"/>
            <person name="Copeland A."/>
            <person name="Lucas S."/>
            <person name="Lapidus A."/>
            <person name="Barry K."/>
            <person name="Detter J.C."/>
            <person name="Glavina del Rio T."/>
            <person name="Hammon N."/>
            <person name="Israni S."/>
            <person name="Dalin E."/>
            <person name="Tice H."/>
            <person name="Pitluck S."/>
            <person name="Di Bartolo G."/>
            <person name="Chain P."/>
            <person name="Malfatti S."/>
            <person name="Shin M."/>
            <person name="Vergez L."/>
            <person name="Schmutz J."/>
            <person name="Larimer F."/>
            <person name="Land M."/>
            <person name="Hauser L."/>
            <person name="Worsham P."/>
            <person name="Chu M."/>
            <person name="Bearden S."/>
            <person name="Garcia E."/>
            <person name="Richardson P."/>
        </authorList>
    </citation>
    <scope>NUCLEOTIDE SEQUENCE [LARGE SCALE GENOMIC DNA]</scope>
    <source>
        <strain>Pestoides F</strain>
    </source>
</reference>
<feature type="chain" id="PRO_1000023537" description="3-dehydroquinate dehydratase">
    <location>
        <begin position="1"/>
        <end position="150"/>
    </location>
</feature>
<feature type="active site" description="Proton acceptor" evidence="1">
    <location>
        <position position="26"/>
    </location>
</feature>
<feature type="active site" description="Proton donor" evidence="1">
    <location>
        <position position="103"/>
    </location>
</feature>
<feature type="binding site" evidence="1">
    <location>
        <position position="77"/>
    </location>
    <ligand>
        <name>substrate</name>
    </ligand>
</feature>
<feature type="binding site" evidence="1">
    <location>
        <position position="83"/>
    </location>
    <ligand>
        <name>substrate</name>
    </ligand>
</feature>
<feature type="binding site" evidence="1">
    <location>
        <position position="90"/>
    </location>
    <ligand>
        <name>substrate</name>
    </ligand>
</feature>
<feature type="binding site" evidence="1">
    <location>
        <begin position="104"/>
        <end position="105"/>
    </location>
    <ligand>
        <name>substrate</name>
    </ligand>
</feature>
<feature type="binding site" evidence="1">
    <location>
        <position position="114"/>
    </location>
    <ligand>
        <name>substrate</name>
    </ligand>
</feature>
<feature type="site" description="Transition state stabilizer" evidence="1">
    <location>
        <position position="21"/>
    </location>
</feature>